<accession>Q5X2T2</accession>
<reference key="1">
    <citation type="journal article" date="2004" name="Nat. Genet.">
        <title>Evidence in the Legionella pneumophila genome for exploitation of host cell functions and high genome plasticity.</title>
        <authorList>
            <person name="Cazalet C."/>
            <person name="Rusniok C."/>
            <person name="Brueggemann H."/>
            <person name="Zidane N."/>
            <person name="Magnier A."/>
            <person name="Ma L."/>
            <person name="Tichit M."/>
            <person name="Jarraud S."/>
            <person name="Bouchier C."/>
            <person name="Vandenesch F."/>
            <person name="Kunst F."/>
            <person name="Etienne J."/>
            <person name="Glaser P."/>
            <person name="Buchrieser C."/>
        </authorList>
    </citation>
    <scope>NUCLEOTIDE SEQUENCE [LARGE SCALE GENOMIC DNA]</scope>
    <source>
        <strain>Paris</strain>
    </source>
</reference>
<sequence length="277" mass="30389">MALFIFLILVGYLMGSINSAIIVCRTFGLPDPREEGSKNPGATNVLRLGGKQYGIMVMVFDALKGILPVILAKLLSAEPVTVAFTALAAVVGHMYPVFFHFRGGKGVATTIGALLAFHFVIGVMVAATWLLVANFWRYSSLASIASISLAPFYSLILVGNLNIFPPLFMITILVLYKHRDNFNRLIDGKEPKIKFKHSVIEEIMEASPATSAEQEFPGKEVIDTNIDETEKTEQAEAVKKPKAKKATTKAKKTASKEETTKKPRSTKPKTKTVKEKE</sequence>
<comment type="function">
    <text evidence="1">Catalyzes the transfer of an acyl group from acyl-phosphate (acyl-PO(4)) to glycerol-3-phosphate (G3P) to form lysophosphatidic acid (LPA). This enzyme utilizes acyl-phosphate as fatty acyl donor, but not acyl-CoA or acyl-ACP.</text>
</comment>
<comment type="catalytic activity">
    <reaction evidence="1">
        <text>an acyl phosphate + sn-glycerol 3-phosphate = a 1-acyl-sn-glycero-3-phosphate + phosphate</text>
        <dbReference type="Rhea" id="RHEA:34075"/>
        <dbReference type="ChEBI" id="CHEBI:43474"/>
        <dbReference type="ChEBI" id="CHEBI:57597"/>
        <dbReference type="ChEBI" id="CHEBI:57970"/>
        <dbReference type="ChEBI" id="CHEBI:59918"/>
        <dbReference type="EC" id="2.3.1.275"/>
    </reaction>
</comment>
<comment type="pathway">
    <text evidence="1">Lipid metabolism; phospholipid metabolism.</text>
</comment>
<comment type="subunit">
    <text evidence="1">Probably interacts with PlsX.</text>
</comment>
<comment type="subcellular location">
    <subcellularLocation>
        <location evidence="1">Cell inner membrane</location>
        <topology evidence="1">Multi-pass membrane protein</topology>
    </subcellularLocation>
</comment>
<comment type="similarity">
    <text evidence="1">Belongs to the PlsY family.</text>
</comment>
<organism>
    <name type="scientific">Legionella pneumophila (strain Paris)</name>
    <dbReference type="NCBI Taxonomy" id="297246"/>
    <lineage>
        <taxon>Bacteria</taxon>
        <taxon>Pseudomonadati</taxon>
        <taxon>Pseudomonadota</taxon>
        <taxon>Gammaproteobacteria</taxon>
        <taxon>Legionellales</taxon>
        <taxon>Legionellaceae</taxon>
        <taxon>Legionella</taxon>
    </lineage>
</organism>
<evidence type="ECO:0000255" key="1">
    <source>
        <dbReference type="HAMAP-Rule" id="MF_01043"/>
    </source>
</evidence>
<evidence type="ECO:0000256" key="2">
    <source>
        <dbReference type="SAM" id="MobiDB-lite"/>
    </source>
</evidence>
<feature type="chain" id="PRO_0000188391" description="Glycerol-3-phosphate acyltransferase">
    <location>
        <begin position="1"/>
        <end position="277"/>
    </location>
</feature>
<feature type="transmembrane region" description="Helical" evidence="1">
    <location>
        <begin position="3"/>
        <end position="23"/>
    </location>
</feature>
<feature type="transmembrane region" description="Helical" evidence="1">
    <location>
        <begin position="55"/>
        <end position="75"/>
    </location>
</feature>
<feature type="transmembrane region" description="Helical" evidence="1">
    <location>
        <begin position="79"/>
        <end position="99"/>
    </location>
</feature>
<feature type="transmembrane region" description="Helical" evidence="1">
    <location>
        <begin position="111"/>
        <end position="131"/>
    </location>
</feature>
<feature type="transmembrane region" description="Helical" evidence="1">
    <location>
        <begin position="155"/>
        <end position="175"/>
    </location>
</feature>
<feature type="region of interest" description="Disordered" evidence="2">
    <location>
        <begin position="207"/>
        <end position="277"/>
    </location>
</feature>
<feature type="compositionally biased region" description="Basic and acidic residues" evidence="2">
    <location>
        <begin position="216"/>
        <end position="239"/>
    </location>
</feature>
<feature type="compositionally biased region" description="Basic residues" evidence="2">
    <location>
        <begin position="240"/>
        <end position="253"/>
    </location>
</feature>
<feature type="compositionally biased region" description="Basic residues" evidence="2">
    <location>
        <begin position="262"/>
        <end position="271"/>
    </location>
</feature>
<gene>
    <name evidence="1" type="primary">plsY</name>
    <name type="ordered locus">lpp2305</name>
</gene>
<keyword id="KW-0997">Cell inner membrane</keyword>
<keyword id="KW-1003">Cell membrane</keyword>
<keyword id="KW-0444">Lipid biosynthesis</keyword>
<keyword id="KW-0443">Lipid metabolism</keyword>
<keyword id="KW-0472">Membrane</keyword>
<keyword id="KW-0594">Phospholipid biosynthesis</keyword>
<keyword id="KW-1208">Phospholipid metabolism</keyword>
<keyword id="KW-0808">Transferase</keyword>
<keyword id="KW-0812">Transmembrane</keyword>
<keyword id="KW-1133">Transmembrane helix</keyword>
<protein>
    <recommendedName>
        <fullName evidence="1">Glycerol-3-phosphate acyltransferase</fullName>
    </recommendedName>
    <alternativeName>
        <fullName evidence="1">Acyl-PO4 G3P acyltransferase</fullName>
    </alternativeName>
    <alternativeName>
        <fullName evidence="1">Acyl-phosphate--glycerol-3-phosphate acyltransferase</fullName>
    </alternativeName>
    <alternativeName>
        <fullName evidence="1">G3P acyltransferase</fullName>
        <shortName evidence="1">GPAT</shortName>
        <ecNumber evidence="1">2.3.1.275</ecNumber>
    </alternativeName>
    <alternativeName>
        <fullName evidence="1">Lysophosphatidic acid synthase</fullName>
        <shortName evidence="1">LPA synthase</shortName>
    </alternativeName>
</protein>
<name>PLSY_LEGPA</name>
<proteinExistence type="inferred from homology"/>
<dbReference type="EC" id="2.3.1.275" evidence="1"/>
<dbReference type="EMBL" id="CR628336">
    <property type="protein sequence ID" value="CAH13458.1"/>
    <property type="molecule type" value="Genomic_DNA"/>
</dbReference>
<dbReference type="RefSeq" id="WP_015961444.1">
    <property type="nucleotide sequence ID" value="NC_006368.1"/>
</dbReference>
<dbReference type="SMR" id="Q5X2T2"/>
<dbReference type="KEGG" id="lpp:lpp2305"/>
<dbReference type="LegioList" id="lpp2305"/>
<dbReference type="HOGENOM" id="CLU_081254_0_1_6"/>
<dbReference type="UniPathway" id="UPA00085"/>
<dbReference type="GO" id="GO:0005886">
    <property type="term" value="C:plasma membrane"/>
    <property type="evidence" value="ECO:0007669"/>
    <property type="project" value="UniProtKB-SubCell"/>
</dbReference>
<dbReference type="GO" id="GO:0043772">
    <property type="term" value="F:acyl-phosphate glycerol-3-phosphate acyltransferase activity"/>
    <property type="evidence" value="ECO:0007669"/>
    <property type="project" value="UniProtKB-UniRule"/>
</dbReference>
<dbReference type="GO" id="GO:0008654">
    <property type="term" value="P:phospholipid biosynthetic process"/>
    <property type="evidence" value="ECO:0007669"/>
    <property type="project" value="UniProtKB-UniRule"/>
</dbReference>
<dbReference type="HAMAP" id="MF_01043">
    <property type="entry name" value="PlsY"/>
    <property type="match status" value="1"/>
</dbReference>
<dbReference type="InterPro" id="IPR003811">
    <property type="entry name" value="G3P_acylTferase_PlsY"/>
</dbReference>
<dbReference type="NCBIfam" id="TIGR00023">
    <property type="entry name" value="glycerol-3-phosphate 1-O-acyltransferase PlsY"/>
    <property type="match status" value="1"/>
</dbReference>
<dbReference type="PANTHER" id="PTHR30309:SF0">
    <property type="entry name" value="GLYCEROL-3-PHOSPHATE ACYLTRANSFERASE-RELATED"/>
    <property type="match status" value="1"/>
</dbReference>
<dbReference type="PANTHER" id="PTHR30309">
    <property type="entry name" value="INNER MEMBRANE PROTEIN YGIH"/>
    <property type="match status" value="1"/>
</dbReference>
<dbReference type="Pfam" id="PF02660">
    <property type="entry name" value="G3P_acyltransf"/>
    <property type="match status" value="1"/>
</dbReference>
<dbReference type="SMART" id="SM01207">
    <property type="entry name" value="G3P_acyltransf"/>
    <property type="match status" value="1"/>
</dbReference>